<dbReference type="EC" id="1.1.1.94" evidence="1"/>
<dbReference type="EMBL" id="CP000766">
    <property type="protein sequence ID" value="ABY72592.1"/>
    <property type="molecule type" value="Genomic_DNA"/>
</dbReference>
<dbReference type="RefSeq" id="WP_012150809.1">
    <property type="nucleotide sequence ID" value="NC_010263.3"/>
</dbReference>
<dbReference type="SMR" id="B0BXL6"/>
<dbReference type="KEGG" id="rrj:RrIowa_0734"/>
<dbReference type="eggNOG" id="COG0240">
    <property type="taxonomic scope" value="Bacteria"/>
</dbReference>
<dbReference type="HOGENOM" id="CLU_033449_0_0_5"/>
<dbReference type="UniPathway" id="UPA00940"/>
<dbReference type="Proteomes" id="UP000000796">
    <property type="component" value="Chromosome"/>
</dbReference>
<dbReference type="GO" id="GO:0005829">
    <property type="term" value="C:cytosol"/>
    <property type="evidence" value="ECO:0007669"/>
    <property type="project" value="TreeGrafter"/>
</dbReference>
<dbReference type="GO" id="GO:0047952">
    <property type="term" value="F:glycerol-3-phosphate dehydrogenase [NAD(P)+] activity"/>
    <property type="evidence" value="ECO:0007669"/>
    <property type="project" value="UniProtKB-UniRule"/>
</dbReference>
<dbReference type="GO" id="GO:0051287">
    <property type="term" value="F:NAD binding"/>
    <property type="evidence" value="ECO:0007669"/>
    <property type="project" value="InterPro"/>
</dbReference>
<dbReference type="GO" id="GO:0005975">
    <property type="term" value="P:carbohydrate metabolic process"/>
    <property type="evidence" value="ECO:0007669"/>
    <property type="project" value="InterPro"/>
</dbReference>
<dbReference type="GO" id="GO:0046167">
    <property type="term" value="P:glycerol-3-phosphate biosynthetic process"/>
    <property type="evidence" value="ECO:0007669"/>
    <property type="project" value="UniProtKB-UniRule"/>
</dbReference>
<dbReference type="GO" id="GO:0046168">
    <property type="term" value="P:glycerol-3-phosphate catabolic process"/>
    <property type="evidence" value="ECO:0007669"/>
    <property type="project" value="InterPro"/>
</dbReference>
<dbReference type="GO" id="GO:0006650">
    <property type="term" value="P:glycerophospholipid metabolic process"/>
    <property type="evidence" value="ECO:0007669"/>
    <property type="project" value="UniProtKB-UniRule"/>
</dbReference>
<dbReference type="GO" id="GO:0008654">
    <property type="term" value="P:phospholipid biosynthetic process"/>
    <property type="evidence" value="ECO:0007669"/>
    <property type="project" value="UniProtKB-KW"/>
</dbReference>
<dbReference type="Gene3D" id="1.10.1040.10">
    <property type="entry name" value="N-(1-d-carboxylethyl)-l-norvaline Dehydrogenase, domain 2"/>
    <property type="match status" value="1"/>
</dbReference>
<dbReference type="Gene3D" id="3.40.50.720">
    <property type="entry name" value="NAD(P)-binding Rossmann-like Domain"/>
    <property type="match status" value="1"/>
</dbReference>
<dbReference type="HAMAP" id="MF_00394">
    <property type="entry name" value="NAD_Glyc3P_dehydrog"/>
    <property type="match status" value="1"/>
</dbReference>
<dbReference type="InterPro" id="IPR008927">
    <property type="entry name" value="6-PGluconate_DH-like_C_sf"/>
</dbReference>
<dbReference type="InterPro" id="IPR013328">
    <property type="entry name" value="6PGD_dom2"/>
</dbReference>
<dbReference type="InterPro" id="IPR006168">
    <property type="entry name" value="G3P_DH_NAD-dep"/>
</dbReference>
<dbReference type="InterPro" id="IPR006109">
    <property type="entry name" value="G3P_DH_NAD-dep_C"/>
</dbReference>
<dbReference type="InterPro" id="IPR011128">
    <property type="entry name" value="G3P_DH_NAD-dep_N"/>
</dbReference>
<dbReference type="InterPro" id="IPR036291">
    <property type="entry name" value="NAD(P)-bd_dom_sf"/>
</dbReference>
<dbReference type="NCBIfam" id="NF000940">
    <property type="entry name" value="PRK00094.1-2"/>
    <property type="match status" value="1"/>
</dbReference>
<dbReference type="NCBIfam" id="NF000947">
    <property type="entry name" value="PRK00094.2-5"/>
    <property type="match status" value="1"/>
</dbReference>
<dbReference type="PANTHER" id="PTHR11728">
    <property type="entry name" value="GLYCEROL-3-PHOSPHATE DEHYDROGENASE"/>
    <property type="match status" value="1"/>
</dbReference>
<dbReference type="PANTHER" id="PTHR11728:SF1">
    <property type="entry name" value="GLYCEROL-3-PHOSPHATE DEHYDROGENASE [NAD(+)] 2, CHLOROPLASTIC"/>
    <property type="match status" value="1"/>
</dbReference>
<dbReference type="Pfam" id="PF07479">
    <property type="entry name" value="NAD_Gly3P_dh_C"/>
    <property type="match status" value="1"/>
</dbReference>
<dbReference type="Pfam" id="PF01210">
    <property type="entry name" value="NAD_Gly3P_dh_N"/>
    <property type="match status" value="1"/>
</dbReference>
<dbReference type="PIRSF" id="PIRSF000114">
    <property type="entry name" value="Glycerol-3-P_dh"/>
    <property type="match status" value="1"/>
</dbReference>
<dbReference type="PRINTS" id="PR00077">
    <property type="entry name" value="GPDHDRGNASE"/>
</dbReference>
<dbReference type="SUPFAM" id="SSF48179">
    <property type="entry name" value="6-phosphogluconate dehydrogenase C-terminal domain-like"/>
    <property type="match status" value="1"/>
</dbReference>
<dbReference type="SUPFAM" id="SSF51735">
    <property type="entry name" value="NAD(P)-binding Rossmann-fold domains"/>
    <property type="match status" value="1"/>
</dbReference>
<dbReference type="PROSITE" id="PS00957">
    <property type="entry name" value="NAD_G3PDH"/>
    <property type="match status" value="1"/>
</dbReference>
<evidence type="ECO:0000255" key="1">
    <source>
        <dbReference type="HAMAP-Rule" id="MF_00394"/>
    </source>
</evidence>
<feature type="chain" id="PRO_1000080313" description="Glycerol-3-phosphate dehydrogenase [NAD(P)+]">
    <location>
        <begin position="1"/>
        <end position="338"/>
    </location>
</feature>
<feature type="active site" description="Proton acceptor" evidence="1">
    <location>
        <position position="192"/>
    </location>
</feature>
<feature type="binding site" evidence="1">
    <location>
        <position position="14"/>
    </location>
    <ligand>
        <name>NADPH</name>
        <dbReference type="ChEBI" id="CHEBI:57783"/>
    </ligand>
</feature>
<feature type="binding site" evidence="1">
    <location>
        <position position="15"/>
    </location>
    <ligand>
        <name>NADPH</name>
        <dbReference type="ChEBI" id="CHEBI:57783"/>
    </ligand>
</feature>
<feature type="binding site" evidence="1">
    <location>
        <position position="35"/>
    </location>
    <ligand>
        <name>NADPH</name>
        <dbReference type="ChEBI" id="CHEBI:57783"/>
    </ligand>
</feature>
<feature type="binding site" evidence="1">
    <location>
        <position position="109"/>
    </location>
    <ligand>
        <name>NADPH</name>
        <dbReference type="ChEBI" id="CHEBI:57783"/>
    </ligand>
</feature>
<feature type="binding site" evidence="1">
    <location>
        <position position="109"/>
    </location>
    <ligand>
        <name>sn-glycerol 3-phosphate</name>
        <dbReference type="ChEBI" id="CHEBI:57597"/>
    </ligand>
</feature>
<feature type="binding site" evidence="1">
    <location>
        <position position="137"/>
    </location>
    <ligand>
        <name>sn-glycerol 3-phosphate</name>
        <dbReference type="ChEBI" id="CHEBI:57597"/>
    </ligand>
</feature>
<feature type="binding site" evidence="1">
    <location>
        <position position="141"/>
    </location>
    <ligand>
        <name>NADPH</name>
        <dbReference type="ChEBI" id="CHEBI:57783"/>
    </ligand>
</feature>
<feature type="binding site" evidence="1">
    <location>
        <position position="192"/>
    </location>
    <ligand>
        <name>sn-glycerol 3-phosphate</name>
        <dbReference type="ChEBI" id="CHEBI:57597"/>
    </ligand>
</feature>
<feature type="binding site" evidence="1">
    <location>
        <position position="247"/>
    </location>
    <ligand>
        <name>sn-glycerol 3-phosphate</name>
        <dbReference type="ChEBI" id="CHEBI:57597"/>
    </ligand>
</feature>
<feature type="binding site" evidence="1">
    <location>
        <position position="257"/>
    </location>
    <ligand>
        <name>sn-glycerol 3-phosphate</name>
        <dbReference type="ChEBI" id="CHEBI:57597"/>
    </ligand>
</feature>
<feature type="binding site" evidence="1">
    <location>
        <position position="258"/>
    </location>
    <ligand>
        <name>NADPH</name>
        <dbReference type="ChEBI" id="CHEBI:57783"/>
    </ligand>
</feature>
<feature type="binding site" evidence="1">
    <location>
        <position position="258"/>
    </location>
    <ligand>
        <name>sn-glycerol 3-phosphate</name>
        <dbReference type="ChEBI" id="CHEBI:57597"/>
    </ligand>
</feature>
<feature type="binding site" evidence="1">
    <location>
        <position position="259"/>
    </location>
    <ligand>
        <name>sn-glycerol 3-phosphate</name>
        <dbReference type="ChEBI" id="CHEBI:57597"/>
    </ligand>
</feature>
<feature type="binding site" evidence="1">
    <location>
        <position position="282"/>
    </location>
    <ligand>
        <name>NADPH</name>
        <dbReference type="ChEBI" id="CHEBI:57783"/>
    </ligand>
</feature>
<feature type="binding site" evidence="1">
    <location>
        <position position="284"/>
    </location>
    <ligand>
        <name>NADPH</name>
        <dbReference type="ChEBI" id="CHEBI:57783"/>
    </ligand>
</feature>
<organism>
    <name type="scientific">Rickettsia rickettsii (strain Iowa)</name>
    <dbReference type="NCBI Taxonomy" id="452659"/>
    <lineage>
        <taxon>Bacteria</taxon>
        <taxon>Pseudomonadati</taxon>
        <taxon>Pseudomonadota</taxon>
        <taxon>Alphaproteobacteria</taxon>
        <taxon>Rickettsiales</taxon>
        <taxon>Rickettsiaceae</taxon>
        <taxon>Rickettsieae</taxon>
        <taxon>Rickettsia</taxon>
        <taxon>spotted fever group</taxon>
    </lineage>
</organism>
<comment type="function">
    <text evidence="1">Catalyzes the reduction of the glycolytic intermediate dihydroxyacetone phosphate (DHAP) to sn-glycerol 3-phosphate (G3P), the key precursor for phospholipid synthesis.</text>
</comment>
<comment type="catalytic activity">
    <reaction evidence="1">
        <text>sn-glycerol 3-phosphate + NAD(+) = dihydroxyacetone phosphate + NADH + H(+)</text>
        <dbReference type="Rhea" id="RHEA:11092"/>
        <dbReference type="ChEBI" id="CHEBI:15378"/>
        <dbReference type="ChEBI" id="CHEBI:57540"/>
        <dbReference type="ChEBI" id="CHEBI:57597"/>
        <dbReference type="ChEBI" id="CHEBI:57642"/>
        <dbReference type="ChEBI" id="CHEBI:57945"/>
        <dbReference type="EC" id="1.1.1.94"/>
    </reaction>
    <physiologicalReaction direction="right-to-left" evidence="1">
        <dbReference type="Rhea" id="RHEA:11094"/>
    </physiologicalReaction>
</comment>
<comment type="catalytic activity">
    <reaction evidence="1">
        <text>sn-glycerol 3-phosphate + NADP(+) = dihydroxyacetone phosphate + NADPH + H(+)</text>
        <dbReference type="Rhea" id="RHEA:11096"/>
        <dbReference type="ChEBI" id="CHEBI:15378"/>
        <dbReference type="ChEBI" id="CHEBI:57597"/>
        <dbReference type="ChEBI" id="CHEBI:57642"/>
        <dbReference type="ChEBI" id="CHEBI:57783"/>
        <dbReference type="ChEBI" id="CHEBI:58349"/>
        <dbReference type="EC" id="1.1.1.94"/>
    </reaction>
    <physiologicalReaction direction="right-to-left" evidence="1">
        <dbReference type="Rhea" id="RHEA:11098"/>
    </physiologicalReaction>
</comment>
<comment type="pathway">
    <text evidence="1">Membrane lipid metabolism; glycerophospholipid metabolism.</text>
</comment>
<comment type="subcellular location">
    <subcellularLocation>
        <location evidence="1">Cytoplasm</location>
    </subcellularLocation>
</comment>
<comment type="similarity">
    <text evidence="1">Belongs to the NAD-dependent glycerol-3-phosphate dehydrogenase family.</text>
</comment>
<sequence>MNKFKNIAVYGGGSFGTSLASLAAQNCNNVTLFLRDEAIAKEILHNKTNVKYLGDIKLPAHLQATTNLDIIKDFELIIIAVPSYAFDDSIKLLKTHSISKDNTLLIATKGFARNPTTLFSDRLKTLLPHSPTAFFVGPNLAKELAKNLPASASIASLDIDIANKIAYNLSSKIFTTNVSSDIVTLQVAGALKNIFAIKSGIDLARKQGENARATLIVAALKEIAILSKALGGMQKNSDILLEGVVGDLVLTCYSLGSRNTKFGYELGISSDKKQFLQEYKELVEGREALKLVLDLIKKYNLHMPIISEVASCVIPYVIPAKAGMTYESTQQCLRRNDI</sequence>
<accession>B0BXL6</accession>
<keyword id="KW-0963">Cytoplasm</keyword>
<keyword id="KW-0444">Lipid biosynthesis</keyword>
<keyword id="KW-0443">Lipid metabolism</keyword>
<keyword id="KW-0520">NAD</keyword>
<keyword id="KW-0521">NADP</keyword>
<keyword id="KW-0547">Nucleotide-binding</keyword>
<keyword id="KW-0560">Oxidoreductase</keyword>
<keyword id="KW-0594">Phospholipid biosynthesis</keyword>
<keyword id="KW-1208">Phospholipid metabolism</keyword>
<reference key="1">
    <citation type="journal article" date="2008" name="Infect. Immun.">
        <title>Genomic comparison of virulent Rickettsia rickettsii Sheila Smith and avirulent Rickettsia rickettsii Iowa.</title>
        <authorList>
            <person name="Ellison D.W."/>
            <person name="Clark T.R."/>
            <person name="Sturdevant D.E."/>
            <person name="Virtaneva K."/>
            <person name="Porcella S.F."/>
            <person name="Hackstadt T."/>
        </authorList>
    </citation>
    <scope>NUCLEOTIDE SEQUENCE [LARGE SCALE GENOMIC DNA]</scope>
    <source>
        <strain>Iowa</strain>
    </source>
</reference>
<proteinExistence type="inferred from homology"/>
<name>GPDA_RICRO</name>
<protein>
    <recommendedName>
        <fullName evidence="1">Glycerol-3-phosphate dehydrogenase [NAD(P)+]</fullName>
        <ecNumber evidence="1">1.1.1.94</ecNumber>
    </recommendedName>
    <alternativeName>
        <fullName evidence="1">NAD(P)(+)-dependent glycerol-3-phosphate dehydrogenase</fullName>
    </alternativeName>
    <alternativeName>
        <fullName evidence="1">NAD(P)H-dependent dihydroxyacetone-phosphate reductase</fullName>
    </alternativeName>
</protein>
<gene>
    <name evidence="1" type="primary">gpsA</name>
    <name type="ordered locus">RrIowa_0734</name>
</gene>